<gene>
    <name evidence="1" type="primary">recF</name>
    <name type="ordered locus">PSHAa0003</name>
</gene>
<accession>Q3IDE8</accession>
<feature type="chain" id="PRO_0000236133" description="DNA replication and repair protein RecF">
    <location>
        <begin position="1"/>
        <end position="364"/>
    </location>
</feature>
<feature type="binding site" evidence="1">
    <location>
        <begin position="30"/>
        <end position="37"/>
    </location>
    <ligand>
        <name>ATP</name>
        <dbReference type="ChEBI" id="CHEBI:30616"/>
    </ligand>
</feature>
<reference key="1">
    <citation type="journal article" date="2005" name="Genome Res.">
        <title>Coping with cold: the genome of the versatile marine Antarctica bacterium Pseudoalteromonas haloplanktis TAC125.</title>
        <authorList>
            <person name="Medigue C."/>
            <person name="Krin E."/>
            <person name="Pascal G."/>
            <person name="Barbe V."/>
            <person name="Bernsel A."/>
            <person name="Bertin P.N."/>
            <person name="Cheung F."/>
            <person name="Cruveiller S."/>
            <person name="D'Amico S."/>
            <person name="Duilio A."/>
            <person name="Fang G."/>
            <person name="Feller G."/>
            <person name="Ho C."/>
            <person name="Mangenot S."/>
            <person name="Marino G."/>
            <person name="Nilsson J."/>
            <person name="Parrilli E."/>
            <person name="Rocha E.P.C."/>
            <person name="Rouy Z."/>
            <person name="Sekowska A."/>
            <person name="Tutino M.L."/>
            <person name="Vallenet D."/>
            <person name="von Heijne G."/>
            <person name="Danchin A."/>
        </authorList>
    </citation>
    <scope>NUCLEOTIDE SEQUENCE [LARGE SCALE GENOMIC DNA]</scope>
    <source>
        <strain>TAC 125</strain>
    </source>
</reference>
<organism>
    <name type="scientific">Pseudoalteromonas translucida (strain TAC 125)</name>
    <dbReference type="NCBI Taxonomy" id="326442"/>
    <lineage>
        <taxon>Bacteria</taxon>
        <taxon>Pseudomonadati</taxon>
        <taxon>Pseudomonadota</taxon>
        <taxon>Gammaproteobacteria</taxon>
        <taxon>Alteromonadales</taxon>
        <taxon>Pseudoalteromonadaceae</taxon>
        <taxon>Pseudoalteromonas</taxon>
    </lineage>
</organism>
<proteinExistence type="inferred from homology"/>
<keyword id="KW-0067">ATP-binding</keyword>
<keyword id="KW-0963">Cytoplasm</keyword>
<keyword id="KW-0227">DNA damage</keyword>
<keyword id="KW-0234">DNA repair</keyword>
<keyword id="KW-0235">DNA replication</keyword>
<keyword id="KW-0238">DNA-binding</keyword>
<keyword id="KW-0547">Nucleotide-binding</keyword>
<keyword id="KW-1185">Reference proteome</keyword>
<keyword id="KW-0742">SOS response</keyword>
<evidence type="ECO:0000255" key="1">
    <source>
        <dbReference type="HAMAP-Rule" id="MF_00365"/>
    </source>
</evidence>
<sequence>MSLSHLSLKYFRNIEALTLEPVNGVNIIYGENGSGKTSLLEAIYYLSHGKSFRTSKHKSIIAHQQEQFVIHGRKAIHDLSIPIGISKTQAGETNLKIQGKASRKISELAQLMPVQIITPESYSLFFGGPKERRKFLDLGLFHVEHEFFFLWQSFNKVLKQRNALLKSKPKNYFDQIKFWDKEFVRLAEQINKLRMAYISRFKQQFFDKMCAELTLIRDLEISFNAGWKESESLSDALELNFERDARQGFTSKGPHKADFSFSVAGSSVENIFSRGQLKLLLYALKVTQNSLIESETDKQSILLIDDLPSELSEDTKEKVGQLLAHCSSQIFISSILSESISAVVEPMQRELQMFHVKHGNLITR</sequence>
<protein>
    <recommendedName>
        <fullName evidence="1">DNA replication and repair protein RecF</fullName>
    </recommendedName>
</protein>
<dbReference type="EMBL" id="CR954246">
    <property type="protein sequence ID" value="CAI85117.1"/>
    <property type="molecule type" value="Genomic_DNA"/>
</dbReference>
<dbReference type="SMR" id="Q3IDE8"/>
<dbReference type="STRING" id="326442.PSHAa0003"/>
<dbReference type="KEGG" id="pha:PSHAa0003"/>
<dbReference type="eggNOG" id="COG1195">
    <property type="taxonomic scope" value="Bacteria"/>
</dbReference>
<dbReference type="HOGENOM" id="CLU_040267_0_0_6"/>
<dbReference type="BioCyc" id="PHAL326442:PSHA_RS00015-MONOMER"/>
<dbReference type="Proteomes" id="UP000006843">
    <property type="component" value="Chromosome I"/>
</dbReference>
<dbReference type="GO" id="GO:0005737">
    <property type="term" value="C:cytoplasm"/>
    <property type="evidence" value="ECO:0007669"/>
    <property type="project" value="UniProtKB-SubCell"/>
</dbReference>
<dbReference type="GO" id="GO:0005524">
    <property type="term" value="F:ATP binding"/>
    <property type="evidence" value="ECO:0007669"/>
    <property type="project" value="UniProtKB-UniRule"/>
</dbReference>
<dbReference type="GO" id="GO:0003697">
    <property type="term" value="F:single-stranded DNA binding"/>
    <property type="evidence" value="ECO:0007669"/>
    <property type="project" value="UniProtKB-UniRule"/>
</dbReference>
<dbReference type="GO" id="GO:0006260">
    <property type="term" value="P:DNA replication"/>
    <property type="evidence" value="ECO:0007669"/>
    <property type="project" value="UniProtKB-UniRule"/>
</dbReference>
<dbReference type="GO" id="GO:0000731">
    <property type="term" value="P:DNA synthesis involved in DNA repair"/>
    <property type="evidence" value="ECO:0007669"/>
    <property type="project" value="TreeGrafter"/>
</dbReference>
<dbReference type="GO" id="GO:0006302">
    <property type="term" value="P:double-strand break repair"/>
    <property type="evidence" value="ECO:0007669"/>
    <property type="project" value="TreeGrafter"/>
</dbReference>
<dbReference type="GO" id="GO:0009432">
    <property type="term" value="P:SOS response"/>
    <property type="evidence" value="ECO:0007669"/>
    <property type="project" value="UniProtKB-UniRule"/>
</dbReference>
<dbReference type="Gene3D" id="3.40.50.300">
    <property type="entry name" value="P-loop containing nucleotide triphosphate hydrolases"/>
    <property type="match status" value="1"/>
</dbReference>
<dbReference type="Gene3D" id="1.20.1050.90">
    <property type="entry name" value="RecF/RecN/SMC, N-terminal domain"/>
    <property type="match status" value="1"/>
</dbReference>
<dbReference type="HAMAP" id="MF_00365">
    <property type="entry name" value="RecF"/>
    <property type="match status" value="1"/>
</dbReference>
<dbReference type="InterPro" id="IPR001238">
    <property type="entry name" value="DNA-binding_RecF"/>
</dbReference>
<dbReference type="InterPro" id="IPR018078">
    <property type="entry name" value="DNA-binding_RecF_CS"/>
</dbReference>
<dbReference type="InterPro" id="IPR027417">
    <property type="entry name" value="P-loop_NTPase"/>
</dbReference>
<dbReference type="InterPro" id="IPR003395">
    <property type="entry name" value="RecF/RecN/SMC_N"/>
</dbReference>
<dbReference type="InterPro" id="IPR042174">
    <property type="entry name" value="RecF_2"/>
</dbReference>
<dbReference type="NCBIfam" id="TIGR00611">
    <property type="entry name" value="recf"/>
    <property type="match status" value="1"/>
</dbReference>
<dbReference type="PANTHER" id="PTHR32182">
    <property type="entry name" value="DNA REPLICATION AND REPAIR PROTEIN RECF"/>
    <property type="match status" value="1"/>
</dbReference>
<dbReference type="PANTHER" id="PTHR32182:SF0">
    <property type="entry name" value="DNA REPLICATION AND REPAIR PROTEIN RECF"/>
    <property type="match status" value="1"/>
</dbReference>
<dbReference type="Pfam" id="PF02463">
    <property type="entry name" value="SMC_N"/>
    <property type="match status" value="1"/>
</dbReference>
<dbReference type="SUPFAM" id="SSF52540">
    <property type="entry name" value="P-loop containing nucleoside triphosphate hydrolases"/>
    <property type="match status" value="1"/>
</dbReference>
<dbReference type="PROSITE" id="PS00617">
    <property type="entry name" value="RECF_1"/>
    <property type="match status" value="1"/>
</dbReference>
<comment type="function">
    <text evidence="1">The RecF protein is involved in DNA metabolism; it is required for DNA replication and normal SOS inducibility. RecF binds preferentially to single-stranded, linear DNA. It also seems to bind ATP.</text>
</comment>
<comment type="subcellular location">
    <subcellularLocation>
        <location evidence="1">Cytoplasm</location>
    </subcellularLocation>
</comment>
<comment type="similarity">
    <text evidence="1">Belongs to the RecF family.</text>
</comment>
<name>RECF_PSET1</name>